<proteinExistence type="evidence at protein level"/>
<evidence type="ECO:0000250" key="1"/>
<evidence type="ECO:0000305" key="2"/>
<evidence type="ECO:0000305" key="3">
    <source>
    </source>
</evidence>
<name>GBLPB_ORYSJ</name>
<accession>Q6L4F8</accession>
<accession>A0A0P0WQK4</accession>
<sequence>MAGQESLTLAGVLRGHNDMVTAIAAPIDNSPFIVSSSRDKSLLVWDITNPSTAVATDPEAAPPEYGVSYRRLTGHSHFVQDVVLSSDGQFALSGSWDGELRLWDLATGRTTRRFVGHTKDVLSVAFSVDNRQIVSAARDNTIKLWNTLGECKYTIGGDHGAGEGHTGWVSCVRFSPNPMAPTIVSGSWDRSVKVWNLTNCKLRTKLEGHNGYVNAVAVSPDGSLCASGGKDGTTLLWDLTEGKMLYKLDAGAIIHSLCFSPNRYWLCAATEDSVKIWDLESKLVMQDLKPEVQAFKSQMLYCTSLSWSADGSTLFAGYTDGTIRVWKVSGFGGYAI</sequence>
<protein>
    <recommendedName>
        <fullName evidence="2">Small ribosomal subunit protein RACK1y</fullName>
    </recommendedName>
    <alternativeName>
        <fullName>Guanine nucleotide-binding protein subunit beta-like protein B</fullName>
        <shortName>GPB-LR</shortName>
    </alternativeName>
    <alternativeName>
        <fullName>Receptor for activated C kinase 1B</fullName>
    </alternativeName>
</protein>
<reference key="1">
    <citation type="journal article" date="2005" name="Mol. Genet. Genomics">
        <title>A fine physical map of the rice chromosome 5.</title>
        <authorList>
            <person name="Cheng C.-H."/>
            <person name="Chung M.C."/>
            <person name="Liu S.-M."/>
            <person name="Chen S.-K."/>
            <person name="Kao F.Y."/>
            <person name="Lin S.-J."/>
            <person name="Hsiao S.-H."/>
            <person name="Tseng I.C."/>
            <person name="Hsing Y.-I.C."/>
            <person name="Wu H.-P."/>
            <person name="Chen C.-S."/>
            <person name="Shaw J.-F."/>
            <person name="Wu J."/>
            <person name="Matsumoto T."/>
            <person name="Sasaki T."/>
            <person name="Chen H.-C."/>
            <person name="Chow T.-Y."/>
        </authorList>
    </citation>
    <scope>NUCLEOTIDE SEQUENCE [LARGE SCALE GENOMIC DNA]</scope>
    <source>
        <strain>cv. Nipponbare</strain>
    </source>
</reference>
<reference key="2">
    <citation type="journal article" date="2005" name="Nature">
        <title>The map-based sequence of the rice genome.</title>
        <authorList>
            <consortium name="International rice genome sequencing project (IRGSP)"/>
        </authorList>
    </citation>
    <scope>NUCLEOTIDE SEQUENCE [LARGE SCALE GENOMIC DNA]</scope>
    <source>
        <strain>cv. Nipponbare</strain>
    </source>
</reference>
<reference key="3">
    <citation type="journal article" date="2008" name="Nucleic Acids Res.">
        <title>The rice annotation project database (RAP-DB): 2008 update.</title>
        <authorList>
            <consortium name="The rice annotation project (RAP)"/>
        </authorList>
    </citation>
    <scope>GENOME REANNOTATION</scope>
    <source>
        <strain>cv. Nipponbare</strain>
    </source>
</reference>
<reference key="4">
    <citation type="journal article" date="2013" name="Rice">
        <title>Improvement of the Oryza sativa Nipponbare reference genome using next generation sequence and optical map data.</title>
        <authorList>
            <person name="Kawahara Y."/>
            <person name="de la Bastide M."/>
            <person name="Hamilton J.P."/>
            <person name="Kanamori H."/>
            <person name="McCombie W.R."/>
            <person name="Ouyang S."/>
            <person name="Schwartz D.C."/>
            <person name="Tanaka T."/>
            <person name="Wu J."/>
            <person name="Zhou S."/>
            <person name="Childs K.L."/>
            <person name="Davidson R.M."/>
            <person name="Lin H."/>
            <person name="Quesada-Ocampo L."/>
            <person name="Vaillancourt B."/>
            <person name="Sakai H."/>
            <person name="Lee S.S."/>
            <person name="Kim J."/>
            <person name="Numa H."/>
            <person name="Itoh T."/>
            <person name="Buell C.R."/>
            <person name="Matsumoto T."/>
        </authorList>
    </citation>
    <scope>GENOME REANNOTATION</scope>
    <source>
        <strain>cv. Nipponbare</strain>
    </source>
</reference>
<reference key="5">
    <citation type="journal article" date="2005" name="PLoS Biol.">
        <title>The genomes of Oryza sativa: a history of duplications.</title>
        <authorList>
            <person name="Yu J."/>
            <person name="Wang J."/>
            <person name="Lin W."/>
            <person name="Li S."/>
            <person name="Li H."/>
            <person name="Zhou J."/>
            <person name="Ni P."/>
            <person name="Dong W."/>
            <person name="Hu S."/>
            <person name="Zeng C."/>
            <person name="Zhang J."/>
            <person name="Zhang Y."/>
            <person name="Li R."/>
            <person name="Xu Z."/>
            <person name="Li S."/>
            <person name="Li X."/>
            <person name="Zheng H."/>
            <person name="Cong L."/>
            <person name="Lin L."/>
            <person name="Yin J."/>
            <person name="Geng J."/>
            <person name="Li G."/>
            <person name="Shi J."/>
            <person name="Liu J."/>
            <person name="Lv H."/>
            <person name="Li J."/>
            <person name="Wang J."/>
            <person name="Deng Y."/>
            <person name="Ran L."/>
            <person name="Shi X."/>
            <person name="Wang X."/>
            <person name="Wu Q."/>
            <person name="Li C."/>
            <person name="Ren X."/>
            <person name="Wang J."/>
            <person name="Wang X."/>
            <person name="Li D."/>
            <person name="Liu D."/>
            <person name="Zhang X."/>
            <person name="Ji Z."/>
            <person name="Zhao W."/>
            <person name="Sun Y."/>
            <person name="Zhang Z."/>
            <person name="Bao J."/>
            <person name="Han Y."/>
            <person name="Dong L."/>
            <person name="Ji J."/>
            <person name="Chen P."/>
            <person name="Wu S."/>
            <person name="Liu J."/>
            <person name="Xiao Y."/>
            <person name="Bu D."/>
            <person name="Tan J."/>
            <person name="Yang L."/>
            <person name="Ye C."/>
            <person name="Zhang J."/>
            <person name="Xu J."/>
            <person name="Zhou Y."/>
            <person name="Yu Y."/>
            <person name="Zhang B."/>
            <person name="Zhuang S."/>
            <person name="Wei H."/>
            <person name="Liu B."/>
            <person name="Lei M."/>
            <person name="Yu H."/>
            <person name="Li Y."/>
            <person name="Xu H."/>
            <person name="Wei S."/>
            <person name="He X."/>
            <person name="Fang L."/>
            <person name="Zhang Z."/>
            <person name="Zhang Y."/>
            <person name="Huang X."/>
            <person name="Su Z."/>
            <person name="Tong W."/>
            <person name="Li J."/>
            <person name="Tong Z."/>
            <person name="Li S."/>
            <person name="Ye J."/>
            <person name="Wang L."/>
            <person name="Fang L."/>
            <person name="Lei T."/>
            <person name="Chen C.-S."/>
            <person name="Chen H.-C."/>
            <person name="Xu Z."/>
            <person name="Li H."/>
            <person name="Huang H."/>
            <person name="Zhang F."/>
            <person name="Xu H."/>
            <person name="Li N."/>
            <person name="Zhao C."/>
            <person name="Li S."/>
            <person name="Dong L."/>
            <person name="Huang Y."/>
            <person name="Li L."/>
            <person name="Xi Y."/>
            <person name="Qi Q."/>
            <person name="Li W."/>
            <person name="Zhang B."/>
            <person name="Hu W."/>
            <person name="Zhang Y."/>
            <person name="Tian X."/>
            <person name="Jiao Y."/>
            <person name="Liang X."/>
            <person name="Jin J."/>
            <person name="Gao L."/>
            <person name="Zheng W."/>
            <person name="Hao B."/>
            <person name="Liu S.-M."/>
            <person name="Wang W."/>
            <person name="Yuan L."/>
            <person name="Cao M."/>
            <person name="McDermott J."/>
            <person name="Samudrala R."/>
            <person name="Wang J."/>
            <person name="Wong G.K.-S."/>
            <person name="Yang H."/>
        </authorList>
    </citation>
    <scope>NUCLEOTIDE SEQUENCE [LARGE SCALE GENOMIC DNA]</scope>
    <source>
        <strain>cv. Nipponbare</strain>
    </source>
</reference>
<reference key="6">
    <citation type="journal article" date="2003" name="Science">
        <title>Collection, mapping, and annotation of over 28,000 cDNA clones from japonica rice.</title>
        <authorList>
            <consortium name="The rice full-length cDNA consortium"/>
        </authorList>
    </citation>
    <scope>NUCLEOTIDE SEQUENCE [LARGE SCALE MRNA]</scope>
    <source>
        <strain>cv. Nipponbare</strain>
    </source>
</reference>
<reference key="7">
    <citation type="journal article" date="2008" name="Plant Cell">
        <title>RACK1 functions in rice innate immunity by interacting with the Rac1 immune complex.</title>
        <authorList>
            <person name="Nakashima A."/>
            <person name="Chen L."/>
            <person name="Thao N.P."/>
            <person name="Fujiwara M."/>
            <person name="Wong H.L."/>
            <person name="Kuwano M."/>
            <person name="Umemura K."/>
            <person name="Shirasu K."/>
            <person name="Kawasaki T."/>
            <person name="Shimamoto K."/>
        </authorList>
    </citation>
    <scope>SUBUNIT</scope>
</reference>
<comment type="function">
    <text evidence="1">Component of the RACK1 regulatory proteins that play a role in multiple signal transduction pathways.</text>
</comment>
<comment type="subunit">
    <text evidence="3">Homodimer and heterodimer with RACK1A.</text>
</comment>
<comment type="similarity">
    <text evidence="2">Belongs to the WD repeat G protein beta family. Ribosomal protein RACK1 subfamily.</text>
</comment>
<organism>
    <name type="scientific">Oryza sativa subsp. japonica</name>
    <name type="common">Rice</name>
    <dbReference type="NCBI Taxonomy" id="39947"/>
    <lineage>
        <taxon>Eukaryota</taxon>
        <taxon>Viridiplantae</taxon>
        <taxon>Streptophyta</taxon>
        <taxon>Embryophyta</taxon>
        <taxon>Tracheophyta</taxon>
        <taxon>Spermatophyta</taxon>
        <taxon>Magnoliopsida</taxon>
        <taxon>Liliopsida</taxon>
        <taxon>Poales</taxon>
        <taxon>Poaceae</taxon>
        <taxon>BOP clade</taxon>
        <taxon>Oryzoideae</taxon>
        <taxon>Oryzeae</taxon>
        <taxon>Oryzinae</taxon>
        <taxon>Oryza</taxon>
        <taxon>Oryza sativa</taxon>
    </lineage>
</organism>
<keyword id="KW-1185">Reference proteome</keyword>
<keyword id="KW-0677">Repeat</keyword>
<keyword id="KW-0687">Ribonucleoprotein</keyword>
<keyword id="KW-0689">Ribosomal protein</keyword>
<keyword id="KW-0807">Transducer</keyword>
<keyword id="KW-0853">WD repeat</keyword>
<gene>
    <name type="primary">RACK1B</name>
    <name type="ordered locus">Os05g0552300</name>
    <name type="ordered locus">LOC_Os05g47890</name>
    <name type="ORF">OsJ_19467</name>
    <name type="ORF">OSJNBa0079H23.13</name>
    <name type="ORF">P0560C03.18</name>
</gene>
<feature type="chain" id="PRO_0000403656" description="Small ribosomal subunit protein RACK1y">
    <location>
        <begin position="1"/>
        <end position="336"/>
    </location>
</feature>
<feature type="repeat" description="WD 1">
    <location>
        <begin position="15"/>
        <end position="55"/>
    </location>
</feature>
<feature type="repeat" description="WD 2">
    <location>
        <begin position="74"/>
        <end position="113"/>
    </location>
</feature>
<feature type="repeat" description="WD 3">
    <location>
        <begin position="116"/>
        <end position="155"/>
    </location>
</feature>
<feature type="repeat" description="WD 4">
    <location>
        <begin position="164"/>
        <end position="205"/>
    </location>
</feature>
<feature type="repeat" description="WD 5">
    <location>
        <begin position="208"/>
        <end position="247"/>
    </location>
</feature>
<feature type="repeat" description="WD 6">
    <location>
        <begin position="249"/>
        <end position="287"/>
    </location>
</feature>
<feature type="repeat" description="WD 7">
    <location>
        <begin position="297"/>
        <end position="336"/>
    </location>
</feature>
<dbReference type="EMBL" id="AC129717">
    <property type="protein sequence ID" value="AAT85192.1"/>
    <property type="molecule type" value="Genomic_DNA"/>
</dbReference>
<dbReference type="EMBL" id="AC135925">
    <property type="protein sequence ID" value="AAT39277.1"/>
    <property type="molecule type" value="Genomic_DNA"/>
</dbReference>
<dbReference type="EMBL" id="AP008211">
    <property type="protein sequence ID" value="BAF18168.1"/>
    <property type="molecule type" value="Genomic_DNA"/>
</dbReference>
<dbReference type="EMBL" id="AP014961">
    <property type="protein sequence ID" value="BAS95226.1"/>
    <property type="molecule type" value="Genomic_DNA"/>
</dbReference>
<dbReference type="EMBL" id="CM000142">
    <property type="protein sequence ID" value="EEE64615.1"/>
    <property type="molecule type" value="Genomic_DNA"/>
</dbReference>
<dbReference type="EMBL" id="AK062179">
    <property type="protein sequence ID" value="BAG88240.1"/>
    <property type="molecule type" value="mRNA"/>
</dbReference>
<dbReference type="EMBL" id="AK065272">
    <property type="protein sequence ID" value="BAG89443.1"/>
    <property type="molecule type" value="mRNA"/>
</dbReference>
<dbReference type="EMBL" id="AK121567">
    <property type="protein sequence ID" value="BAH00554.1"/>
    <property type="molecule type" value="mRNA"/>
</dbReference>
<dbReference type="RefSeq" id="XP_015640003.1">
    <property type="nucleotide sequence ID" value="XM_015784517.1"/>
</dbReference>
<dbReference type="SMR" id="Q6L4F8"/>
<dbReference type="FunCoup" id="Q6L4F8">
    <property type="interactions" value="2570"/>
</dbReference>
<dbReference type="STRING" id="39947.Q6L4F8"/>
<dbReference type="CarbonylDB" id="Q6L4F8"/>
<dbReference type="PaxDb" id="39947-Q6L4F8"/>
<dbReference type="EnsemblPlants" id="Os05t0552300-02">
    <property type="protein sequence ID" value="Os05t0552300-02"/>
    <property type="gene ID" value="Os05g0552300"/>
</dbReference>
<dbReference type="Gramene" id="Os05t0552300-02">
    <property type="protein sequence ID" value="Os05t0552300-02"/>
    <property type="gene ID" value="Os05g0552300"/>
</dbReference>
<dbReference type="KEGG" id="dosa:Os05g0552300"/>
<dbReference type="eggNOG" id="KOG0279">
    <property type="taxonomic scope" value="Eukaryota"/>
</dbReference>
<dbReference type="HOGENOM" id="CLU_000288_57_7_1"/>
<dbReference type="InParanoid" id="Q6L4F8"/>
<dbReference type="OMA" id="AQVPYCV"/>
<dbReference type="OrthoDB" id="7875889at2759"/>
<dbReference type="Proteomes" id="UP000000763">
    <property type="component" value="Chromosome 5"/>
</dbReference>
<dbReference type="Proteomes" id="UP000007752">
    <property type="component" value="Chromosome 5"/>
</dbReference>
<dbReference type="Proteomes" id="UP000059680">
    <property type="component" value="Chromosome 5"/>
</dbReference>
<dbReference type="GO" id="GO:0005829">
    <property type="term" value="C:cytosol"/>
    <property type="evidence" value="ECO:0000318"/>
    <property type="project" value="GO_Central"/>
</dbReference>
<dbReference type="GO" id="GO:0005634">
    <property type="term" value="C:nucleus"/>
    <property type="evidence" value="ECO:0000318"/>
    <property type="project" value="GO_Central"/>
</dbReference>
<dbReference type="GO" id="GO:1990904">
    <property type="term" value="C:ribonucleoprotein complex"/>
    <property type="evidence" value="ECO:0007669"/>
    <property type="project" value="UniProtKB-KW"/>
</dbReference>
<dbReference type="GO" id="GO:0005840">
    <property type="term" value="C:ribosome"/>
    <property type="evidence" value="ECO:0007669"/>
    <property type="project" value="UniProtKB-KW"/>
</dbReference>
<dbReference type="GO" id="GO:0005080">
    <property type="term" value="F:protein kinase C binding"/>
    <property type="evidence" value="ECO:0000318"/>
    <property type="project" value="GO_Central"/>
</dbReference>
<dbReference type="GO" id="GO:0043022">
    <property type="term" value="F:ribosome binding"/>
    <property type="evidence" value="ECO:0000318"/>
    <property type="project" value="GO_Central"/>
</dbReference>
<dbReference type="GO" id="GO:0045182">
    <property type="term" value="F:translation regulator activity"/>
    <property type="evidence" value="ECO:0007669"/>
    <property type="project" value="InterPro"/>
</dbReference>
<dbReference type="GO" id="GO:2001125">
    <property type="term" value="P:negative regulation of translational frameshifting"/>
    <property type="evidence" value="ECO:0000318"/>
    <property type="project" value="GO_Central"/>
</dbReference>
<dbReference type="GO" id="GO:0072344">
    <property type="term" value="P:rescue of stalled ribosome"/>
    <property type="evidence" value="ECO:0000318"/>
    <property type="project" value="GO_Central"/>
</dbReference>
<dbReference type="GO" id="GO:0007165">
    <property type="term" value="P:signal transduction"/>
    <property type="evidence" value="ECO:0007669"/>
    <property type="project" value="UniProtKB-KW"/>
</dbReference>
<dbReference type="CDD" id="cd00200">
    <property type="entry name" value="WD40"/>
    <property type="match status" value="1"/>
</dbReference>
<dbReference type="FunFam" id="2.130.10.10:FF:000018">
    <property type="entry name" value="Receptor for activated C kinase 1"/>
    <property type="match status" value="1"/>
</dbReference>
<dbReference type="Gene3D" id="2.130.10.10">
    <property type="entry name" value="YVTN repeat-like/Quinoprotein amine dehydrogenase"/>
    <property type="match status" value="1"/>
</dbReference>
<dbReference type="InterPro" id="IPR020472">
    <property type="entry name" value="G-protein_beta_WD-40_rep"/>
</dbReference>
<dbReference type="InterPro" id="IPR045223">
    <property type="entry name" value="RACK1-like"/>
</dbReference>
<dbReference type="InterPro" id="IPR015943">
    <property type="entry name" value="WD40/YVTN_repeat-like_dom_sf"/>
</dbReference>
<dbReference type="InterPro" id="IPR019775">
    <property type="entry name" value="WD40_repeat_CS"/>
</dbReference>
<dbReference type="InterPro" id="IPR036322">
    <property type="entry name" value="WD40_repeat_dom_sf"/>
</dbReference>
<dbReference type="InterPro" id="IPR001680">
    <property type="entry name" value="WD40_rpt"/>
</dbReference>
<dbReference type="PANTHER" id="PTHR19868">
    <property type="entry name" value="RECEPTOR FOR ACTIVATED PROTEIN KINASE C RACK1"/>
    <property type="match status" value="1"/>
</dbReference>
<dbReference type="Pfam" id="PF00400">
    <property type="entry name" value="WD40"/>
    <property type="match status" value="7"/>
</dbReference>
<dbReference type="PRINTS" id="PR00320">
    <property type="entry name" value="GPROTEINBRPT"/>
</dbReference>
<dbReference type="SMART" id="SM00320">
    <property type="entry name" value="WD40"/>
    <property type="match status" value="7"/>
</dbReference>
<dbReference type="SUPFAM" id="SSF50978">
    <property type="entry name" value="WD40 repeat-like"/>
    <property type="match status" value="1"/>
</dbReference>
<dbReference type="PROSITE" id="PS00678">
    <property type="entry name" value="WD_REPEATS_1"/>
    <property type="match status" value="5"/>
</dbReference>
<dbReference type="PROSITE" id="PS50082">
    <property type="entry name" value="WD_REPEATS_2"/>
    <property type="match status" value="6"/>
</dbReference>
<dbReference type="PROSITE" id="PS50294">
    <property type="entry name" value="WD_REPEATS_REGION"/>
    <property type="match status" value="1"/>
</dbReference>